<comment type="function">
    <text evidence="1">Part of the ABC transporter complex ModABC involved in molybdenum import. Responsible for energy coupling to the transport system.</text>
</comment>
<comment type="catalytic activity">
    <reaction evidence="1">
        <text>molybdate(out) + ATP + H2O = molybdate(in) + ADP + phosphate + H(+)</text>
        <dbReference type="Rhea" id="RHEA:22020"/>
        <dbReference type="ChEBI" id="CHEBI:15377"/>
        <dbReference type="ChEBI" id="CHEBI:15378"/>
        <dbReference type="ChEBI" id="CHEBI:30616"/>
        <dbReference type="ChEBI" id="CHEBI:36264"/>
        <dbReference type="ChEBI" id="CHEBI:43474"/>
        <dbReference type="ChEBI" id="CHEBI:456216"/>
        <dbReference type="EC" id="7.3.2.5"/>
    </reaction>
</comment>
<comment type="subunit">
    <text evidence="1">The complex is composed of two ATP-binding proteins (ModC), two transmembrane proteins (ModB) and a solute-binding protein (ModA).</text>
</comment>
<comment type="subcellular location">
    <subcellularLocation>
        <location>Cell inner membrane</location>
        <topology>Peripheral membrane protein</topology>
    </subcellularLocation>
</comment>
<comment type="similarity">
    <text evidence="1">Belongs to the ABC transporter superfamily. Molybdate importer (TC 3.A.1.8) family.</text>
</comment>
<evidence type="ECO:0000255" key="1">
    <source>
        <dbReference type="HAMAP-Rule" id="MF_01705"/>
    </source>
</evidence>
<evidence type="ECO:0000255" key="2">
    <source>
        <dbReference type="PROSITE-ProRule" id="PRU01213"/>
    </source>
</evidence>
<gene>
    <name evidence="1" type="primary">modC</name>
    <name type="synonym">molD</name>
</gene>
<name>MODC_RHOCA</name>
<reference key="1">
    <citation type="journal article" date="1993" name="J. Bacteriol.">
        <title>Characterization of Rhodobacter capsulatus genes encoding a molybdenum transport system and putative molybdenum-pterin-binding proteins.</title>
        <authorList>
            <person name="Wang G."/>
            <person name="Angermueller S."/>
            <person name="Klipp W."/>
        </authorList>
    </citation>
    <scope>NUCLEOTIDE SEQUENCE [GENOMIC DNA]</scope>
    <source>
        <strain>ATCC 33303 / B10</strain>
    </source>
</reference>
<keyword id="KW-0067">ATP-binding</keyword>
<keyword id="KW-0997">Cell inner membrane</keyword>
<keyword id="KW-1003">Cell membrane</keyword>
<keyword id="KW-0472">Membrane</keyword>
<keyword id="KW-0500">Molybdenum</keyword>
<keyword id="KW-0547">Nucleotide-binding</keyword>
<keyword id="KW-1278">Translocase</keyword>
<keyword id="KW-0813">Transport</keyword>
<feature type="chain" id="PRO_0000092553" description="Molybdenum import ATP-binding protein ModC">
    <location>
        <begin position="1"/>
        <end position="363"/>
    </location>
</feature>
<feature type="domain" description="ABC transporter" evidence="1">
    <location>
        <begin position="1"/>
        <end position="230"/>
    </location>
</feature>
<feature type="domain" description="Mop" evidence="2">
    <location>
        <begin position="289"/>
        <end position="359"/>
    </location>
</feature>
<feature type="binding site" evidence="1">
    <location>
        <begin position="31"/>
        <end position="38"/>
    </location>
    <ligand>
        <name>ATP</name>
        <dbReference type="ChEBI" id="CHEBI:30616"/>
    </ligand>
</feature>
<accession>Q08381</accession>
<proteinExistence type="inferred from homology"/>
<organism>
    <name type="scientific">Rhodobacter capsulatus</name>
    <name type="common">Rhodopseudomonas capsulata</name>
    <dbReference type="NCBI Taxonomy" id="1061"/>
    <lineage>
        <taxon>Bacteria</taxon>
        <taxon>Pseudomonadati</taxon>
        <taxon>Pseudomonadota</taxon>
        <taxon>Alphaproteobacteria</taxon>
        <taxon>Rhodobacterales</taxon>
        <taxon>Rhodobacter group</taxon>
        <taxon>Rhodobacter</taxon>
    </lineage>
</organism>
<protein>
    <recommendedName>
        <fullName evidence="1">Molybdenum import ATP-binding protein ModC</fullName>
        <ecNumber evidence="1">7.3.2.5</ecNumber>
    </recommendedName>
</protein>
<sequence length="363" mass="38546">MISARFSGRQGDFTLDAAFDVPGQGVTALFGPSGCGKTTVLRCMAGLTRLPGGHLVVNGVTWQEGRQITPPHRRAVGYVFQEASLFTHLSVRENLVYGLRRARGPLRISEAEVTQLLGIDPLLRRPTATLSGGERQRVAIGRALLSQPELLLMDEPLSALDRISRDEILPYLERLHASLQMPVILVSHDLSEVERLADTLVLMEAGRVRAAGPIAAMQADPNLPLIHRPDLAAVIEGVVIALDPAYGLSTLQVPGGRIVVPGNLGPIGARRRLRVPATDVSLGRHAPTDTTILNALPAVILGAEAAEGYQITVRLALGASGEGASLLARVSRKSFDLLGFQPGEQVVARLKAMALSAPAQTGG</sequence>
<dbReference type="EC" id="7.3.2.5" evidence="1"/>
<dbReference type="EMBL" id="L06254">
    <property type="protein sequence ID" value="AAA71909.1"/>
    <property type="molecule type" value="Unassigned_DNA"/>
</dbReference>
<dbReference type="PIR" id="C36914">
    <property type="entry name" value="C36914"/>
</dbReference>
<dbReference type="RefSeq" id="WP_013066308.1">
    <property type="nucleotide sequence ID" value="NZ_JAOTPJ010000011.1"/>
</dbReference>
<dbReference type="SMR" id="Q08381"/>
<dbReference type="IntAct" id="Q08381">
    <property type="interactions" value="1"/>
</dbReference>
<dbReference type="GeneID" id="31489515"/>
<dbReference type="OMA" id="QWLYAQI"/>
<dbReference type="GO" id="GO:0005886">
    <property type="term" value="C:plasma membrane"/>
    <property type="evidence" value="ECO:0007669"/>
    <property type="project" value="UniProtKB-SubCell"/>
</dbReference>
<dbReference type="GO" id="GO:0015412">
    <property type="term" value="F:ABC-type molybdate transporter activity"/>
    <property type="evidence" value="ECO:0007669"/>
    <property type="project" value="UniProtKB-EC"/>
</dbReference>
<dbReference type="GO" id="GO:0005524">
    <property type="term" value="F:ATP binding"/>
    <property type="evidence" value="ECO:0007669"/>
    <property type="project" value="UniProtKB-KW"/>
</dbReference>
<dbReference type="GO" id="GO:0016887">
    <property type="term" value="F:ATP hydrolysis activity"/>
    <property type="evidence" value="ECO:0007669"/>
    <property type="project" value="InterPro"/>
</dbReference>
<dbReference type="CDD" id="cd03297">
    <property type="entry name" value="ABC_ModC_molybdenum_transporter"/>
    <property type="match status" value="1"/>
</dbReference>
<dbReference type="Gene3D" id="2.40.50.100">
    <property type="match status" value="1"/>
</dbReference>
<dbReference type="Gene3D" id="3.40.50.300">
    <property type="entry name" value="P-loop containing nucleotide triphosphate hydrolases"/>
    <property type="match status" value="1"/>
</dbReference>
<dbReference type="InterPro" id="IPR003593">
    <property type="entry name" value="AAA+_ATPase"/>
</dbReference>
<dbReference type="InterPro" id="IPR003439">
    <property type="entry name" value="ABC_transporter-like_ATP-bd"/>
</dbReference>
<dbReference type="InterPro" id="IPR017871">
    <property type="entry name" value="ABC_transporter-like_CS"/>
</dbReference>
<dbReference type="InterPro" id="IPR008995">
    <property type="entry name" value="Mo/tungstate-bd_C_term_dom"/>
</dbReference>
<dbReference type="InterPro" id="IPR011868">
    <property type="entry name" value="ModC_ABC_ATP-bd"/>
</dbReference>
<dbReference type="InterPro" id="IPR050334">
    <property type="entry name" value="Molybdenum_import_ModC"/>
</dbReference>
<dbReference type="InterPro" id="IPR004606">
    <property type="entry name" value="Mop_domain"/>
</dbReference>
<dbReference type="InterPro" id="IPR027417">
    <property type="entry name" value="P-loop_NTPase"/>
</dbReference>
<dbReference type="InterPro" id="IPR005116">
    <property type="entry name" value="Transp-assoc_OB_typ1"/>
</dbReference>
<dbReference type="NCBIfam" id="TIGR02142">
    <property type="entry name" value="modC_ABC"/>
    <property type="match status" value="1"/>
</dbReference>
<dbReference type="PANTHER" id="PTHR43514">
    <property type="entry name" value="ABC TRANSPORTER I FAMILY MEMBER 10"/>
    <property type="match status" value="1"/>
</dbReference>
<dbReference type="PANTHER" id="PTHR43514:SF10">
    <property type="entry name" value="MOLYBDENUM IMPORT ATP-BINDING PROTEIN MODC 2"/>
    <property type="match status" value="1"/>
</dbReference>
<dbReference type="Pfam" id="PF00005">
    <property type="entry name" value="ABC_tran"/>
    <property type="match status" value="1"/>
</dbReference>
<dbReference type="Pfam" id="PF03459">
    <property type="entry name" value="TOBE"/>
    <property type="match status" value="1"/>
</dbReference>
<dbReference type="SMART" id="SM00382">
    <property type="entry name" value="AAA"/>
    <property type="match status" value="1"/>
</dbReference>
<dbReference type="SUPFAM" id="SSF50331">
    <property type="entry name" value="MOP-like"/>
    <property type="match status" value="1"/>
</dbReference>
<dbReference type="SUPFAM" id="SSF52540">
    <property type="entry name" value="P-loop containing nucleoside triphosphate hydrolases"/>
    <property type="match status" value="1"/>
</dbReference>
<dbReference type="PROSITE" id="PS00211">
    <property type="entry name" value="ABC_TRANSPORTER_1"/>
    <property type="match status" value="1"/>
</dbReference>
<dbReference type="PROSITE" id="PS50893">
    <property type="entry name" value="ABC_TRANSPORTER_2"/>
    <property type="match status" value="1"/>
</dbReference>
<dbReference type="PROSITE" id="PS51241">
    <property type="entry name" value="MODC"/>
    <property type="match status" value="1"/>
</dbReference>
<dbReference type="PROSITE" id="PS51866">
    <property type="entry name" value="MOP"/>
    <property type="match status" value="1"/>
</dbReference>